<name>PMGI_PRUDU</name>
<sequence length="488" mass="53395">LPTEDDMGNSEVGHNALGAGRIFAQGAKLVDSALETGKLYEGEGFKYIKESFPTNTLHLIGLLSDGGVHSRLDQLLLLVKGASERGAKRIRVHILTDGRDVLDGSSVGFAETLENYLAQLREKGVDAQIASGGGRMYVTMDRYENDWGVVKRGWDAQVLGEAPHKFKNAVEAIKTLRQEPNTSDQYLPPFVIVDENGKPVGPIVDGDAVVTFNFRADRMVMIAKALEYADFDKFDRVRFPKIRYAGMLQYDGELKLPSKYLVEPPEIDRTSGEYLTYNGVRTFACSETVKFGHVTFFWNGNRSGYFNPQMEEYVEIPSDSGITFNVQPKMKAVEIAEKGRGAILSKKFEQVRVNLPNSDMVGHTSSIEATVVACKAADEAVKIIIDAIEQVGGIYVVTADHGNAEDMVKRNKKGQPLLDKNGNIQILTSHTLQPVPIAIGGPGLAPGVQFRKDVPNGGLANVAATVMNLHGFEAPADYETTLIEVVDN</sequence>
<feature type="chain" id="PRO_0000212112" description="2,3-bisphosphoglycerate-independent phosphoglycerate mutase">
    <location>
        <begin position="1" status="less than"/>
        <end position="488"/>
    </location>
</feature>
<feature type="active site" description="Phosphoserine intermediate" evidence="2">
    <location>
        <position position="10"/>
    </location>
</feature>
<feature type="binding site" evidence="2">
    <location>
        <position position="10"/>
    </location>
    <ligand>
        <name>Mn(2+)</name>
        <dbReference type="ChEBI" id="CHEBI:29035"/>
        <label>2</label>
    </ligand>
</feature>
<feature type="binding site" evidence="2">
    <location>
        <position position="69"/>
    </location>
    <ligand>
        <name>substrate</name>
    </ligand>
</feature>
<feature type="binding site" evidence="2">
    <location>
        <begin position="99"/>
        <end position="100"/>
    </location>
    <ligand>
        <name>substrate</name>
    </ligand>
</feature>
<feature type="binding site" evidence="2">
    <location>
        <position position="135"/>
    </location>
    <ligand>
        <name>substrate</name>
    </ligand>
</feature>
<feature type="binding site" evidence="2">
    <location>
        <position position="142"/>
    </location>
    <ligand>
        <name>substrate</name>
    </ligand>
</feature>
<feature type="binding site" evidence="2">
    <location>
        <begin position="215"/>
        <end position="218"/>
    </location>
    <ligand>
        <name>substrate</name>
    </ligand>
</feature>
<feature type="binding site" evidence="2">
    <location>
        <position position="290"/>
    </location>
    <ligand>
        <name>substrate</name>
    </ligand>
</feature>
<feature type="binding site" evidence="2">
    <location>
        <position position="359"/>
    </location>
    <ligand>
        <name>Mn(2+)</name>
        <dbReference type="ChEBI" id="CHEBI:29035"/>
        <label>1</label>
    </ligand>
</feature>
<feature type="binding site" evidence="2">
    <location>
        <position position="363"/>
    </location>
    <ligand>
        <name>Mn(2+)</name>
        <dbReference type="ChEBI" id="CHEBI:29035"/>
        <label>1</label>
    </ligand>
</feature>
<feature type="binding site" evidence="2">
    <location>
        <position position="400"/>
    </location>
    <ligand>
        <name>Mn(2+)</name>
        <dbReference type="ChEBI" id="CHEBI:29035"/>
        <label>2</label>
    </ligand>
</feature>
<feature type="binding site" evidence="2">
    <location>
        <position position="401"/>
    </location>
    <ligand>
        <name>Mn(2+)</name>
        <dbReference type="ChEBI" id="CHEBI:29035"/>
        <label>2</label>
    </ligand>
</feature>
<feature type="binding site" evidence="2">
    <location>
        <position position="430"/>
    </location>
    <ligand>
        <name>Mn(2+)</name>
        <dbReference type="ChEBI" id="CHEBI:29035"/>
        <label>1</label>
    </ligand>
</feature>
<feature type="non-terminal residue">
    <location>
        <position position="1"/>
    </location>
</feature>
<dbReference type="EC" id="5.4.2.12"/>
<dbReference type="EMBL" id="X75020">
    <property type="protein sequence ID" value="CAA52928.1"/>
    <property type="molecule type" value="mRNA"/>
</dbReference>
<dbReference type="PIR" id="T09138">
    <property type="entry name" value="T09138"/>
</dbReference>
<dbReference type="SMR" id="O24246"/>
<dbReference type="UniPathway" id="UPA00109">
    <property type="reaction ID" value="UER00186"/>
</dbReference>
<dbReference type="GO" id="GO:0005737">
    <property type="term" value="C:cytoplasm"/>
    <property type="evidence" value="ECO:0007669"/>
    <property type="project" value="UniProtKB-SubCell"/>
</dbReference>
<dbReference type="GO" id="GO:0030145">
    <property type="term" value="F:manganese ion binding"/>
    <property type="evidence" value="ECO:0007669"/>
    <property type="project" value="InterPro"/>
</dbReference>
<dbReference type="GO" id="GO:0004619">
    <property type="term" value="F:phosphoglycerate mutase activity"/>
    <property type="evidence" value="ECO:0007669"/>
    <property type="project" value="UniProtKB-EC"/>
</dbReference>
<dbReference type="GO" id="GO:0006007">
    <property type="term" value="P:glucose catabolic process"/>
    <property type="evidence" value="ECO:0007669"/>
    <property type="project" value="InterPro"/>
</dbReference>
<dbReference type="GO" id="GO:0006096">
    <property type="term" value="P:glycolytic process"/>
    <property type="evidence" value="ECO:0007669"/>
    <property type="project" value="UniProtKB-UniPathway"/>
</dbReference>
<dbReference type="CDD" id="cd16010">
    <property type="entry name" value="iPGM"/>
    <property type="match status" value="1"/>
</dbReference>
<dbReference type="FunFam" id="3.40.1450.10:FF:000002">
    <property type="entry name" value="2,3-bisphosphoglycerate-independent phosphoglycerate mutase"/>
    <property type="match status" value="1"/>
</dbReference>
<dbReference type="Gene3D" id="3.40.720.10">
    <property type="entry name" value="Alkaline Phosphatase, subunit A"/>
    <property type="match status" value="1"/>
</dbReference>
<dbReference type="Gene3D" id="3.40.1450.10">
    <property type="entry name" value="BPG-independent phosphoglycerate mutase, domain B"/>
    <property type="match status" value="1"/>
</dbReference>
<dbReference type="InterPro" id="IPR017850">
    <property type="entry name" value="Alkaline_phosphatase_core_sf"/>
</dbReference>
<dbReference type="InterPro" id="IPR011258">
    <property type="entry name" value="BPG-indep_PGM_N"/>
</dbReference>
<dbReference type="InterPro" id="IPR006124">
    <property type="entry name" value="Metalloenzyme"/>
</dbReference>
<dbReference type="InterPro" id="IPR036646">
    <property type="entry name" value="PGAM_B_sf"/>
</dbReference>
<dbReference type="InterPro" id="IPR005995">
    <property type="entry name" value="Pgm_bpd_ind"/>
</dbReference>
<dbReference type="PANTHER" id="PTHR31637">
    <property type="entry name" value="2,3-BISPHOSPHOGLYCERATE-INDEPENDENT PHOSPHOGLYCERATE MUTASE"/>
    <property type="match status" value="1"/>
</dbReference>
<dbReference type="PANTHER" id="PTHR31637:SF7">
    <property type="entry name" value="2,3-BISPHOSPHOGLYCERATE-INDEPENDENT PHOSPHOGLYCERATE MUTASE 1"/>
    <property type="match status" value="1"/>
</dbReference>
<dbReference type="Pfam" id="PF06415">
    <property type="entry name" value="iPGM_N"/>
    <property type="match status" value="1"/>
</dbReference>
<dbReference type="Pfam" id="PF01676">
    <property type="entry name" value="Metalloenzyme"/>
    <property type="match status" value="1"/>
</dbReference>
<dbReference type="PIRSF" id="PIRSF001492">
    <property type="entry name" value="IPGAM"/>
    <property type="match status" value="1"/>
</dbReference>
<dbReference type="SUPFAM" id="SSF64158">
    <property type="entry name" value="2,3-Bisphosphoglycerate-independent phosphoglycerate mutase, substrate-binding domain"/>
    <property type="match status" value="1"/>
</dbReference>
<dbReference type="SUPFAM" id="SSF53649">
    <property type="entry name" value="Alkaline phosphatase-like"/>
    <property type="match status" value="1"/>
</dbReference>
<accession>O24246</accession>
<protein>
    <recommendedName>
        <fullName>2,3-bisphosphoglycerate-independent phosphoglycerate mutase</fullName>
        <shortName>BPG-independent PGAM</shortName>
        <shortName>Phosphoglyceromutase</shortName>
        <ecNumber>5.4.2.12</ecNumber>
    </recommendedName>
    <alternativeName>
        <fullName>PGAM-I</fullName>
    </alternativeName>
</protein>
<evidence type="ECO:0000250" key="1"/>
<evidence type="ECO:0000250" key="2">
    <source>
        <dbReference type="UniProtKB" id="Q9X519"/>
    </source>
</evidence>
<evidence type="ECO:0000305" key="3"/>
<proteinExistence type="evidence at transcript level"/>
<reference key="1">
    <citation type="journal article" date="1995" name="Comp. Biochem. Physiol.">
        <title>2,3-Bisphosphoglycerate-independent phosphoglycerate mutase is conserved among different phylogenic kingdoms.</title>
        <authorList>
            <person name="Grana X."/>
            <person name="Perez de la Ossa P."/>
            <person name="Broceno C."/>
            <person name="Stocker M."/>
            <person name="Garriga J."/>
            <person name="Puigdomenech P."/>
            <person name="Climent F."/>
        </authorList>
    </citation>
    <scope>NUCLEOTIDE SEQUENCE [MRNA]</scope>
    <source>
        <strain>cv. Texas</strain>
        <tissue>Root</tissue>
    </source>
</reference>
<organism>
    <name type="scientific">Prunus dulcis</name>
    <name type="common">Almond</name>
    <name type="synonym">Amygdalus dulcis</name>
    <dbReference type="NCBI Taxonomy" id="3755"/>
    <lineage>
        <taxon>Eukaryota</taxon>
        <taxon>Viridiplantae</taxon>
        <taxon>Streptophyta</taxon>
        <taxon>Embryophyta</taxon>
        <taxon>Tracheophyta</taxon>
        <taxon>Spermatophyta</taxon>
        <taxon>Magnoliopsida</taxon>
        <taxon>eudicotyledons</taxon>
        <taxon>Gunneridae</taxon>
        <taxon>Pentapetalae</taxon>
        <taxon>rosids</taxon>
        <taxon>fabids</taxon>
        <taxon>Rosales</taxon>
        <taxon>Rosaceae</taxon>
        <taxon>Amygdaloideae</taxon>
        <taxon>Amygdaleae</taxon>
        <taxon>Prunus</taxon>
    </lineage>
</organism>
<comment type="function">
    <text evidence="1">Catalyzes the interconversion of 2-phosphoglycerate and 3-phosphoglycerate.</text>
</comment>
<comment type="catalytic activity">
    <reaction>
        <text>(2R)-2-phosphoglycerate = (2R)-3-phosphoglycerate</text>
        <dbReference type="Rhea" id="RHEA:15901"/>
        <dbReference type="ChEBI" id="CHEBI:58272"/>
        <dbReference type="ChEBI" id="CHEBI:58289"/>
        <dbReference type="EC" id="5.4.2.12"/>
    </reaction>
</comment>
<comment type="cofactor">
    <cofactor evidence="1">
        <name>Mn(2+)</name>
        <dbReference type="ChEBI" id="CHEBI:29035"/>
    </cofactor>
    <text evidence="1">Binds 2 manganese ions per subunit.</text>
</comment>
<comment type="pathway">
    <text>Carbohydrate degradation; glycolysis; pyruvate from D-glyceraldehyde 3-phosphate: step 3/5.</text>
</comment>
<comment type="subunit">
    <text evidence="1">Monomer.</text>
</comment>
<comment type="subcellular location">
    <subcellularLocation>
        <location>Cytoplasm</location>
    </subcellularLocation>
</comment>
<comment type="similarity">
    <text evidence="3">Belongs to the BPG-independent phosphoglycerate mutase family.</text>
</comment>
<keyword id="KW-0963">Cytoplasm</keyword>
<keyword id="KW-0324">Glycolysis</keyword>
<keyword id="KW-0413">Isomerase</keyword>
<keyword id="KW-0464">Manganese</keyword>
<keyword id="KW-0479">Metal-binding</keyword>